<sequence>MPSVRSVTCCCLLWMMFSVQLVTPGSPATAQLSGQRTARGPGSAICNMACRLEHGHLYPFCHCRGKRD</sequence>
<dbReference type="EMBL" id="DQ447642">
    <property type="protein sequence ID" value="ABE27008.1"/>
    <property type="molecule type" value="mRNA"/>
</dbReference>
<dbReference type="SMR" id="Q0N4U6"/>
<dbReference type="ConoServer" id="1460">
    <property type="toxin name" value="Pl14.2 precursor"/>
</dbReference>
<dbReference type="GO" id="GO:0005576">
    <property type="term" value="C:extracellular region"/>
    <property type="evidence" value="ECO:0007669"/>
    <property type="project" value="UniProtKB-SubCell"/>
</dbReference>
<dbReference type="GO" id="GO:0035792">
    <property type="term" value="C:host cell postsynaptic membrane"/>
    <property type="evidence" value="ECO:0007669"/>
    <property type="project" value="UniProtKB-KW"/>
</dbReference>
<dbReference type="GO" id="GO:0030550">
    <property type="term" value="F:acetylcholine receptor inhibitor activity"/>
    <property type="evidence" value="ECO:0007669"/>
    <property type="project" value="UniProtKB-KW"/>
</dbReference>
<dbReference type="GO" id="GO:0015459">
    <property type="term" value="F:potassium channel regulator activity"/>
    <property type="evidence" value="ECO:0007669"/>
    <property type="project" value="UniProtKB-KW"/>
</dbReference>
<dbReference type="GO" id="GO:0090729">
    <property type="term" value="F:toxin activity"/>
    <property type="evidence" value="ECO:0007669"/>
    <property type="project" value="UniProtKB-KW"/>
</dbReference>
<reference key="1">
    <citation type="journal article" date="2006" name="Biochemistry">
        <title>A novel conotoxin inhibitor of Kv1.6 channel and nAChR subtypes defines a new superfamily of conotoxins.</title>
        <authorList>
            <person name="Imperial J.S."/>
            <person name="Bansal P.S."/>
            <person name="Alewood P.F."/>
            <person name="Daly N.L."/>
            <person name="Craik D.J."/>
            <person name="Sporning A."/>
            <person name="Terlau H."/>
            <person name="Lopez-Vera E."/>
            <person name="Bandyopadhyay P.K."/>
            <person name="Olivera B.M."/>
        </authorList>
    </citation>
    <scope>NUCLEOTIDE SEQUENCE [MRNA]</scope>
    <source>
        <tissue>Venom duct</tissue>
    </source>
</reference>
<comment type="function">
    <text evidence="2">Highly inhibits both nicotinic acetylcholine receptors (neuronal (alpha-3/beta-4) and muscular (alpha-1/beta-1/epsilon/delta) subtypes) and the voltage-gated potassium channel Kv1.6/KCNA6 subtype.</text>
</comment>
<comment type="subcellular location">
    <subcellularLocation>
        <location evidence="6">Secreted</location>
    </subcellularLocation>
</comment>
<comment type="tissue specificity">
    <text evidence="6">Expressed by the venom duct.</text>
</comment>
<comment type="domain">
    <text evidence="5">The cysteine framework is XIV (C-C-C-C).</text>
</comment>
<comment type="similarity">
    <text evidence="5">Belongs to the conotoxin J superfamily.</text>
</comment>
<feature type="signal peptide" evidence="3">
    <location>
        <begin position="1"/>
        <end position="27"/>
    </location>
</feature>
<feature type="propeptide" id="PRO_0000260012" evidence="1">
    <location>
        <begin position="28"/>
        <end position="39"/>
    </location>
</feature>
<feature type="peptide" id="PRO_0000260013" description="Alpha/kappa-conotoxin-like pl14.2" evidence="6">
    <location>
        <begin position="40"/>
        <end position="64"/>
    </location>
</feature>
<feature type="propeptide" id="PRO_0000260014" evidence="1">
    <location>
        <begin position="65"/>
        <end position="68" status="greater than"/>
    </location>
</feature>
<feature type="modified residue" description="Arginine amide" evidence="2">
    <location>
        <position position="64"/>
    </location>
</feature>
<feature type="disulfide bond" evidence="2">
    <location>
        <begin position="46"/>
        <end position="61"/>
    </location>
</feature>
<feature type="disulfide bond" evidence="2">
    <location>
        <begin position="50"/>
        <end position="63"/>
    </location>
</feature>
<feature type="non-terminal residue" evidence="5">
    <location>
        <position position="68"/>
    </location>
</feature>
<protein>
    <recommendedName>
        <fullName evidence="4 5">Alpha/kappa-conotoxin-like pl14.2</fullName>
    </recommendedName>
</protein>
<name>CJE2_CONPO</name>
<evidence type="ECO:0000250" key="1"/>
<evidence type="ECO:0000250" key="2">
    <source>
        <dbReference type="UniProtKB" id="Q0N4U8"/>
    </source>
</evidence>
<evidence type="ECO:0000255" key="3"/>
<evidence type="ECO:0000303" key="4">
    <source>
    </source>
</evidence>
<evidence type="ECO:0000305" key="5"/>
<evidence type="ECO:0000305" key="6">
    <source>
    </source>
</evidence>
<organism>
    <name type="scientific">Conus planorbis</name>
    <name type="common">Planorbis cone</name>
    <dbReference type="NCBI Taxonomy" id="97183"/>
    <lineage>
        <taxon>Eukaryota</taxon>
        <taxon>Metazoa</taxon>
        <taxon>Spiralia</taxon>
        <taxon>Lophotrochozoa</taxon>
        <taxon>Mollusca</taxon>
        <taxon>Gastropoda</taxon>
        <taxon>Caenogastropoda</taxon>
        <taxon>Neogastropoda</taxon>
        <taxon>Conoidea</taxon>
        <taxon>Conidae</taxon>
        <taxon>Conus</taxon>
        <taxon>Strategoconus</taxon>
    </lineage>
</organism>
<proteinExistence type="evidence at transcript level"/>
<accession>Q0N4U6</accession>
<keyword id="KW-0008">Acetylcholine receptor inhibiting toxin</keyword>
<keyword id="KW-0027">Amidation</keyword>
<keyword id="KW-1015">Disulfide bond</keyword>
<keyword id="KW-0872">Ion channel impairing toxin</keyword>
<keyword id="KW-0528">Neurotoxin</keyword>
<keyword id="KW-0629">Postsynaptic neurotoxin</keyword>
<keyword id="KW-0632">Potassium channel impairing toxin</keyword>
<keyword id="KW-0964">Secreted</keyword>
<keyword id="KW-0732">Signal</keyword>
<keyword id="KW-0800">Toxin</keyword>
<keyword id="KW-1220">Voltage-gated potassium channel impairing toxin</keyword>